<feature type="chain" id="PRO_0000077735" description="Transcriptional repressor arc">
    <location>
        <begin position="1"/>
        <end position="53"/>
    </location>
</feature>
<feature type="turn" evidence="4">
    <location>
        <begin position="2"/>
        <end position="5"/>
    </location>
</feature>
<feature type="strand" evidence="3">
    <location>
        <begin position="9"/>
        <end position="13"/>
    </location>
</feature>
<feature type="helix" evidence="3">
    <location>
        <begin position="16"/>
        <end position="28"/>
    </location>
</feature>
<feature type="helix" evidence="3">
    <location>
        <begin position="33"/>
        <end position="47"/>
    </location>
</feature>
<feature type="helix" evidence="2">
    <location>
        <begin position="49"/>
        <end position="52"/>
    </location>
</feature>
<organismHost>
    <name type="scientific">Salmonella typhimurium</name>
    <dbReference type="NCBI Taxonomy" id="90371"/>
</organismHost>
<proteinExistence type="evidence at protein level"/>
<comment type="function">
    <text>This protein acts as a transcriptional repressor of its own gene arc and of gene ant.</text>
</comment>
<comment type="subunit">
    <text>Binds DNA as a homotetramer.</text>
</comment>
<comment type="similarity">
    <text evidence="1">Belongs to the p22 arc/mnt family.</text>
</comment>
<sequence length="53" mass="6227">MKGMSKMPQFNLRWPREVLDLVRKVAEENGRSVNSEIYQRVMESFKKEGRIGA</sequence>
<gene>
    <name type="primary">arc</name>
</gene>
<keyword id="KW-0002">3D-structure</keyword>
<keyword id="KW-0238">DNA-binding</keyword>
<keyword id="KW-1185">Reference proteome</keyword>
<keyword id="KW-0678">Repressor</keyword>
<keyword id="KW-0804">Transcription</keyword>
<keyword id="KW-0805">Transcription regulation</keyword>
<organism>
    <name type="scientific">Salmonella phage P22</name>
    <name type="common">Bacteriophage P22</name>
    <dbReference type="NCBI Taxonomy" id="10754"/>
    <lineage>
        <taxon>Viruses</taxon>
        <taxon>Duplodnaviria</taxon>
        <taxon>Heunggongvirae</taxon>
        <taxon>Uroviricota</taxon>
        <taxon>Caudoviricetes</taxon>
        <taxon>Lederbergvirus</taxon>
    </lineage>
</organism>
<dbReference type="EMBL" id="X01916">
    <property type="protein sequence ID" value="CAA25990.1"/>
    <property type="molecule type" value="Genomic_DNA"/>
</dbReference>
<dbReference type="EMBL" id="AF217253">
    <property type="protein sequence ID" value="AAF75058.1"/>
    <property type="molecule type" value="Genomic_DNA"/>
</dbReference>
<dbReference type="EMBL" id="AF527608">
    <property type="protein sequence ID" value="AAM81381.1"/>
    <property type="molecule type" value="Genomic_DNA"/>
</dbReference>
<dbReference type="EMBL" id="BK000583">
    <property type="protein sequence ID" value="DAA00979.1"/>
    <property type="molecule type" value="Genomic_DNA"/>
</dbReference>
<dbReference type="PIR" id="A03586">
    <property type="entry name" value="RGBPA2"/>
</dbReference>
<dbReference type="RefSeq" id="NP_059642.1">
    <property type="nucleotide sequence ID" value="NC_002371.2"/>
</dbReference>
<dbReference type="PDB" id="1ARQ">
    <property type="method" value="NMR"/>
    <property type="chains" value="A/B=1-53"/>
</dbReference>
<dbReference type="PDB" id="1ARR">
    <property type="method" value="NMR"/>
    <property type="chains" value="A/B=1-53"/>
</dbReference>
<dbReference type="PDB" id="1B28">
    <property type="method" value="NMR"/>
    <property type="chains" value="A/B=1-53"/>
</dbReference>
<dbReference type="PDB" id="1BAZ">
    <property type="method" value="X-ray"/>
    <property type="resolution" value="1.90 A"/>
    <property type="chains" value="A/B/C/D=1-53"/>
</dbReference>
<dbReference type="PDB" id="1BDT">
    <property type="method" value="X-ray"/>
    <property type="resolution" value="2.50 A"/>
    <property type="chains" value="A/B/C/D=1-53"/>
</dbReference>
<dbReference type="PDB" id="1BDV">
    <property type="method" value="X-ray"/>
    <property type="resolution" value="2.80 A"/>
    <property type="chains" value="A/B/C/D=1-53"/>
</dbReference>
<dbReference type="PDB" id="1MYK">
    <property type="method" value="X-ray"/>
    <property type="resolution" value="2.40 A"/>
    <property type="chains" value="A/B=1-53"/>
</dbReference>
<dbReference type="PDB" id="1MYL">
    <property type="method" value="X-ray"/>
    <property type="resolution" value="2.40 A"/>
    <property type="chains" value="A/B/C/D/E/F=1-53"/>
</dbReference>
<dbReference type="PDB" id="1NLA">
    <property type="method" value="NMR"/>
    <property type="chains" value="A/B=1-53"/>
</dbReference>
<dbReference type="PDB" id="1PAR">
    <property type="method" value="X-ray"/>
    <property type="resolution" value="2.60 A"/>
    <property type="chains" value="A/B/C/D=1-53"/>
</dbReference>
<dbReference type="PDB" id="1QTG">
    <property type="method" value="NMR"/>
    <property type="chains" value="A/B=1-53"/>
</dbReference>
<dbReference type="PDB" id="1U9P">
    <property type="method" value="X-ray"/>
    <property type="resolution" value="1.90 A"/>
    <property type="chains" value="A=1-52"/>
</dbReference>
<dbReference type="PDBsum" id="1ARQ"/>
<dbReference type="PDBsum" id="1ARR"/>
<dbReference type="PDBsum" id="1B28"/>
<dbReference type="PDBsum" id="1BAZ"/>
<dbReference type="PDBsum" id="1BDT"/>
<dbReference type="PDBsum" id="1BDV"/>
<dbReference type="PDBsum" id="1MYK"/>
<dbReference type="PDBsum" id="1MYL"/>
<dbReference type="PDBsum" id="1NLA"/>
<dbReference type="PDBsum" id="1PAR"/>
<dbReference type="PDBsum" id="1QTG"/>
<dbReference type="PDBsum" id="1U9P"/>
<dbReference type="BMRB" id="P03050"/>
<dbReference type="SMR" id="P03050"/>
<dbReference type="GeneID" id="1262795"/>
<dbReference type="KEGG" id="vg:1262795"/>
<dbReference type="OrthoDB" id="25730at10239"/>
<dbReference type="EvolutionaryTrace" id="P03050"/>
<dbReference type="Proteomes" id="UP000001795">
    <property type="component" value="Segment"/>
</dbReference>
<dbReference type="Proteomes" id="UP000001796">
    <property type="component" value="Segment"/>
</dbReference>
<dbReference type="Proteomes" id="UP000007960">
    <property type="component" value="Segment"/>
</dbReference>
<dbReference type="GO" id="GO:0003677">
    <property type="term" value="F:DNA binding"/>
    <property type="evidence" value="ECO:0007669"/>
    <property type="project" value="UniProtKB-KW"/>
</dbReference>
<dbReference type="GO" id="GO:0006355">
    <property type="term" value="P:regulation of DNA-templated transcription"/>
    <property type="evidence" value="ECO:0007669"/>
    <property type="project" value="InterPro"/>
</dbReference>
<dbReference type="DisProt" id="DP01512"/>
<dbReference type="FunFam" id="1.10.1220.10:FF:000011">
    <property type="entry name" value="Transcriptional repressor arc"/>
    <property type="match status" value="1"/>
</dbReference>
<dbReference type="Gene3D" id="1.10.1220.10">
    <property type="entry name" value="Met repressor-like"/>
    <property type="match status" value="1"/>
</dbReference>
<dbReference type="InterPro" id="IPR005569">
    <property type="entry name" value="Arc_DNA-bd_dom"/>
</dbReference>
<dbReference type="InterPro" id="IPR013321">
    <property type="entry name" value="Arc_rbn_hlx_hlx"/>
</dbReference>
<dbReference type="InterPro" id="IPR010985">
    <property type="entry name" value="Ribbon_hlx_hlx"/>
</dbReference>
<dbReference type="Pfam" id="PF03869">
    <property type="entry name" value="Arc"/>
    <property type="match status" value="1"/>
</dbReference>
<dbReference type="SUPFAM" id="SSF47598">
    <property type="entry name" value="Ribbon-helix-helix"/>
    <property type="match status" value="1"/>
</dbReference>
<evidence type="ECO:0000305" key="1"/>
<evidence type="ECO:0007829" key="2">
    <source>
        <dbReference type="PDB" id="1ARQ"/>
    </source>
</evidence>
<evidence type="ECO:0007829" key="3">
    <source>
        <dbReference type="PDB" id="1BAZ"/>
    </source>
</evidence>
<evidence type="ECO:0007829" key="4">
    <source>
        <dbReference type="PDB" id="1BDT"/>
    </source>
</evidence>
<accession>P03050</accession>
<accession>Q77D84</accession>
<accession>Q7PCJ3</accession>
<protein>
    <recommendedName>
        <fullName>Transcriptional repressor arc</fullName>
    </recommendedName>
</protein>
<reference key="1">
    <citation type="journal article" date="1983" name="J. Mol. Biol.">
        <title>Primary structure of the immI immunity region of bacteriophage P22.</title>
        <authorList>
            <person name="Sauer R.T."/>
            <person name="Krovatin W."/>
            <person name="Deanda J."/>
            <person name="Youderian P."/>
            <person name="Susskind M.M."/>
        </authorList>
    </citation>
    <scope>NUCLEOTIDE SEQUENCE [GENOMIC DNA]</scope>
</reference>
<reference key="2">
    <citation type="journal article" date="2000" name="J. Bacteriol.">
        <title>Sequence of the genome of Salmonella bacteriophage P22.</title>
        <authorList>
            <person name="Vander Byl C.S."/>
            <person name="Kropinski A.M.B."/>
        </authorList>
    </citation>
    <scope>NUCLEOTIDE SEQUENCE [LARGE SCALE GENOMIC DNA]</scope>
</reference>
<reference key="3">
    <citation type="journal article" date="2003" name="J. Bacteriol.">
        <title>Corrected sequence of the bacteriophage P22 genome.</title>
        <authorList>
            <person name="Pedulla M.L."/>
            <person name="Ford M.E."/>
            <person name="Karthikeyan T."/>
            <person name="Houtz J.M."/>
            <person name="Hendrix R.W."/>
            <person name="Hatfull G.F."/>
            <person name="Poteete A.R."/>
            <person name="Gilcrease E.B."/>
            <person name="Winn-Stapley D.A."/>
            <person name="Casjens S.R."/>
        </authorList>
    </citation>
    <scope>NUCLEOTIDE SEQUENCE [LARGE SCALE GENOMIC DNA]</scope>
</reference>
<reference key="4">
    <citation type="journal article" date="1994" name="Nature">
        <title>DNA recognition by beta-sheets in the Arc repressor-operator crystal structure.</title>
        <authorList>
            <person name="Raumann B.E."/>
            <person name="Rould M.A."/>
            <person name="Pabo C.O."/>
            <person name="Sauer R.T."/>
        </authorList>
    </citation>
    <scope>X-RAY CRYSTALLOGRAPHY (2.6 ANGSTROMS)</scope>
</reference>
<reference key="5">
    <citation type="journal article" date="1995" name="Biochemistry">
        <title>Crystal structure, folding, and operator binding of the hyperstable Arc repressor mutant PL8.</title>
        <authorList>
            <person name="Schildbach J.F."/>
            <person name="Milla M.E."/>
            <person name="Jeffrey P.D."/>
            <person name="Raumann B.E."/>
            <person name="Sauer R.T."/>
        </authorList>
    </citation>
    <scope>X-RAY CRYSTALLOGRAPHY (2.4 ANGSTROMS) OF MUTANT LEU-8</scope>
</reference>
<reference key="6">
    <citation type="journal article" date="1999" name="Proc. Natl. Acad. Sci. U.S.A.">
        <title>Origins of DNA-binding specificity: role of protein contacts with the DNA backbone.</title>
        <authorList>
            <person name="Schildbach J.F."/>
            <person name="Karzai A.W."/>
            <person name="Raumann B.E."/>
            <person name="Sauer R.T."/>
        </authorList>
    </citation>
    <scope>X-RAY CRYSTALLOGRAPHY (1.9 ANGSTROMS)</scope>
</reference>
<reference key="7">
    <citation type="journal article" date="1989" name="Biochemistry">
        <title>NMR studies of Arc repressor mutants: proton assignments, secondary structure, and long-range contacts for the thermostable proline-8--&gt; leucine variant of Arc.</title>
        <authorList>
            <person name="Zagorski M.G."/>
            <person name="Bowie J.U."/>
            <person name="Vershon A.K."/>
            <person name="Sauer R.T."/>
            <person name="Patel D.J."/>
        </authorList>
    </citation>
    <scope>STRUCTURE BY NMR</scope>
</reference>
<reference key="8">
    <citation type="journal article" date="1989" name="Biochemistry">
        <title>Sequence-specific 1H NMR assignment and secondary structure of the Arc repressor of bacteriophage P22, as determined by two-dimensional 1H NMR spectroscopy.</title>
        <authorList>
            <person name="Breg J.N."/>
            <person name="Boelens R."/>
            <person name="George A.V.E."/>
            <person name="Kaptein R."/>
        </authorList>
    </citation>
    <scope>STRUCTURE BY NMR</scope>
</reference>
<reference key="9">
    <citation type="journal article" date="1990" name="Nature">
        <title>Structure of Arc repressor in solution: evidence for a family of beta-sheet DNA-binding proteins.</title>
        <authorList>
            <person name="Breg J.N."/>
            <person name="Vsn Opheusden J.H.J."/>
            <person name="Burgering M.J.M."/>
            <person name="Boelens R."/>
            <person name="Kaptein R."/>
        </authorList>
    </citation>
    <scope>STRUCTURE BY NMR</scope>
</reference>
<name>RARC_BPP22</name>